<comment type="function">
    <text evidence="1">Lipid transporter involved in lipid countertransport between the Golgi complex and membranes of the endoplasmic reticulum: specifically exchanges sterol with phosphatidylinositol 4-phosphate (PI4P), delivering sterol to the Golgi in exchange for PI4P, which is degraded by the SAC1 phosphatase in the endoplasmic reticulum.</text>
</comment>
<comment type="similarity">
    <text evidence="2">Belongs to the OSBP family.</text>
</comment>
<organism>
    <name type="scientific">Schizosaccharomyces pombe (strain 972 / ATCC 24843)</name>
    <name type="common">Fission yeast</name>
    <dbReference type="NCBI Taxonomy" id="284812"/>
    <lineage>
        <taxon>Eukaryota</taxon>
        <taxon>Fungi</taxon>
        <taxon>Dikarya</taxon>
        <taxon>Ascomycota</taxon>
        <taxon>Taphrinomycotina</taxon>
        <taxon>Schizosaccharomycetes</taxon>
        <taxon>Schizosaccharomycetales</taxon>
        <taxon>Schizosaccharomycetaceae</taxon>
        <taxon>Schizosaccharomyces</taxon>
    </lineage>
</organism>
<dbReference type="EMBL" id="CU329671">
    <property type="protein sequence ID" value="CAA22202.1"/>
    <property type="molecule type" value="Genomic_DNA"/>
</dbReference>
<dbReference type="EMBL" id="AB016222">
    <property type="protein sequence ID" value="BAA31746.1"/>
    <property type="molecule type" value="mRNA"/>
</dbReference>
<dbReference type="PIR" id="T39348">
    <property type="entry name" value="T39348"/>
</dbReference>
<dbReference type="PIR" id="T43391">
    <property type="entry name" value="T43391"/>
</dbReference>
<dbReference type="RefSeq" id="NP_595138.1">
    <property type="nucleotide sequence ID" value="NM_001021046.2"/>
</dbReference>
<dbReference type="SMR" id="O74178"/>
<dbReference type="BioGRID" id="276739">
    <property type="interactions" value="6"/>
</dbReference>
<dbReference type="FunCoup" id="O74178">
    <property type="interactions" value="70"/>
</dbReference>
<dbReference type="STRING" id="284812.O74178"/>
<dbReference type="iPTMnet" id="O74178"/>
<dbReference type="PaxDb" id="4896-SPBC1271.12.1"/>
<dbReference type="EnsemblFungi" id="SPBC1271.12.1">
    <property type="protein sequence ID" value="SPBC1271.12.1:pep"/>
    <property type="gene ID" value="SPBC1271.12"/>
</dbReference>
<dbReference type="PomBase" id="SPBC1271.12">
    <property type="gene designation" value="kes1"/>
</dbReference>
<dbReference type="VEuPathDB" id="FungiDB:SPBC1271.12"/>
<dbReference type="eggNOG" id="KOG2210">
    <property type="taxonomic scope" value="Eukaryota"/>
</dbReference>
<dbReference type="HOGENOM" id="CLU_012334_0_2_1"/>
<dbReference type="InParanoid" id="O74178"/>
<dbReference type="OMA" id="SSYWTEH"/>
<dbReference type="PhylomeDB" id="O74178"/>
<dbReference type="Reactome" id="R-SPO-1482801">
    <property type="pathway name" value="Acyl chain remodelling of PS"/>
</dbReference>
<dbReference type="PRO" id="PR:O74178"/>
<dbReference type="Proteomes" id="UP000002485">
    <property type="component" value="Chromosome II"/>
</dbReference>
<dbReference type="GO" id="GO:0032153">
    <property type="term" value="C:cell division site"/>
    <property type="evidence" value="ECO:0007005"/>
    <property type="project" value="PomBase"/>
</dbReference>
<dbReference type="GO" id="GO:0005829">
    <property type="term" value="C:cytosol"/>
    <property type="evidence" value="ECO:0000318"/>
    <property type="project" value="GO_Central"/>
</dbReference>
<dbReference type="GO" id="GO:0016020">
    <property type="term" value="C:membrane"/>
    <property type="evidence" value="ECO:0000318"/>
    <property type="project" value="GO_Central"/>
</dbReference>
<dbReference type="GO" id="GO:0008142">
    <property type="term" value="F:oxysterol binding"/>
    <property type="evidence" value="ECO:0000318"/>
    <property type="project" value="GO_Central"/>
</dbReference>
<dbReference type="GO" id="GO:0120015">
    <property type="term" value="F:sterol transfer activity"/>
    <property type="evidence" value="ECO:0000266"/>
    <property type="project" value="PomBase"/>
</dbReference>
<dbReference type="GO" id="GO:0120009">
    <property type="term" value="P:intermembrane lipid transfer"/>
    <property type="evidence" value="ECO:0000305"/>
    <property type="project" value="PomBase"/>
</dbReference>
<dbReference type="GO" id="GO:0006629">
    <property type="term" value="P:lipid metabolic process"/>
    <property type="evidence" value="ECO:0000303"/>
    <property type="project" value="PomBase"/>
</dbReference>
<dbReference type="GO" id="GO:0015918">
    <property type="term" value="P:sterol transport"/>
    <property type="evidence" value="ECO:0000266"/>
    <property type="project" value="PomBase"/>
</dbReference>
<dbReference type="FunFam" id="2.40.160.120:FF:000010">
    <property type="entry name" value="Oxysterol-binding protein homolog 4"/>
    <property type="match status" value="1"/>
</dbReference>
<dbReference type="FunFam" id="3.30.70.3490:FF:000027">
    <property type="entry name" value="Oxysterol-binding protein homolog C354.07c"/>
    <property type="match status" value="1"/>
</dbReference>
<dbReference type="Gene3D" id="1.10.287.2720">
    <property type="match status" value="1"/>
</dbReference>
<dbReference type="Gene3D" id="2.40.160.120">
    <property type="match status" value="1"/>
</dbReference>
<dbReference type="Gene3D" id="3.30.70.3490">
    <property type="match status" value="1"/>
</dbReference>
<dbReference type="Gene3D" id="6.10.250.1430">
    <property type="match status" value="1"/>
</dbReference>
<dbReference type="InterPro" id="IPR037239">
    <property type="entry name" value="OSBP_sf"/>
</dbReference>
<dbReference type="InterPro" id="IPR000648">
    <property type="entry name" value="Oxysterol-bd"/>
</dbReference>
<dbReference type="InterPro" id="IPR018494">
    <property type="entry name" value="Oxysterol-bd_CS"/>
</dbReference>
<dbReference type="PANTHER" id="PTHR10972:SF184">
    <property type="entry name" value="OXYSTEROL-BINDING PROTEIN HOMOLOG 4-RELATED"/>
    <property type="match status" value="1"/>
</dbReference>
<dbReference type="PANTHER" id="PTHR10972">
    <property type="entry name" value="OXYSTEROL-BINDING PROTEIN-RELATED"/>
    <property type="match status" value="1"/>
</dbReference>
<dbReference type="Pfam" id="PF01237">
    <property type="entry name" value="Oxysterol_BP"/>
    <property type="match status" value="1"/>
</dbReference>
<dbReference type="SUPFAM" id="SSF144000">
    <property type="entry name" value="Oxysterol-binding protein-like"/>
    <property type="match status" value="1"/>
</dbReference>
<dbReference type="PROSITE" id="PS01013">
    <property type="entry name" value="OSBP"/>
    <property type="match status" value="1"/>
</dbReference>
<feature type="chain" id="PRO_0000232937" description="Protein kes1">
    <location>
        <begin position="1"/>
        <end position="388"/>
    </location>
</feature>
<gene>
    <name type="primary">kes1</name>
    <name type="ORF">SPBC1271.12</name>
</gene>
<sequence>MSKTTSSDDSRDGEGDKRLRSTTKSTWLSFLKSIATFSGDLSSLTAPSFILSSTSLIEYSAYWAEHPELFISLPRGETPLERQLLVTKWFASTLKNQYAARNERYGSEKKPLNPILGELFTGKWNTDIGEDTELTSEQVSHHPPITAYHIYNKKAGVRLEGYNGHKSGFSGPQIHVKQIGHARLILEPHNEVYYITFPLVTLEGLWYGSPYIELGKKSYIISTSGYLTTIEYSGKGYFTGKKNTFKATIVNAKTKSEPIYRIEGSWTGMLKYCTFEDQKRSAWEDFLDCGNYKPVNISVAPIEEQGEYESRRVWKNFAVALDAGDYAAASQEKSKIEEGQRELRRQEEEHNEVWHRKYFEWKDKDEGFEEATKCLRQPVKEGFWYYLR</sequence>
<proteinExistence type="evidence at transcript level"/>
<accession>O74178</accession>
<accession>Q7LWB8</accession>
<protein>
    <recommendedName>
        <fullName>Protein kes1</fullName>
    </recommendedName>
</protein>
<keyword id="KW-0445">Lipid transport</keyword>
<keyword id="KW-0446">Lipid-binding</keyword>
<keyword id="KW-1185">Reference proteome</keyword>
<keyword id="KW-0813">Transport</keyword>
<name>KES1_SCHPO</name>
<reference key="1">
    <citation type="journal article" date="2002" name="Nature">
        <title>The genome sequence of Schizosaccharomyces pombe.</title>
        <authorList>
            <person name="Wood V."/>
            <person name="Gwilliam R."/>
            <person name="Rajandream M.A."/>
            <person name="Lyne M.H."/>
            <person name="Lyne R."/>
            <person name="Stewart A."/>
            <person name="Sgouros J.G."/>
            <person name="Peat N."/>
            <person name="Hayles J."/>
            <person name="Baker S.G."/>
            <person name="Basham D."/>
            <person name="Bowman S."/>
            <person name="Brooks K."/>
            <person name="Brown D."/>
            <person name="Brown S."/>
            <person name="Chillingworth T."/>
            <person name="Churcher C.M."/>
            <person name="Collins M."/>
            <person name="Connor R."/>
            <person name="Cronin A."/>
            <person name="Davis P."/>
            <person name="Feltwell T."/>
            <person name="Fraser A."/>
            <person name="Gentles S."/>
            <person name="Goble A."/>
            <person name="Hamlin N."/>
            <person name="Harris D.E."/>
            <person name="Hidalgo J."/>
            <person name="Hodgson G."/>
            <person name="Holroyd S."/>
            <person name="Hornsby T."/>
            <person name="Howarth S."/>
            <person name="Huckle E.J."/>
            <person name="Hunt S."/>
            <person name="Jagels K."/>
            <person name="James K.D."/>
            <person name="Jones L."/>
            <person name="Jones M."/>
            <person name="Leather S."/>
            <person name="McDonald S."/>
            <person name="McLean J."/>
            <person name="Mooney P."/>
            <person name="Moule S."/>
            <person name="Mungall K.L."/>
            <person name="Murphy L.D."/>
            <person name="Niblett D."/>
            <person name="Odell C."/>
            <person name="Oliver K."/>
            <person name="O'Neil S."/>
            <person name="Pearson D."/>
            <person name="Quail M.A."/>
            <person name="Rabbinowitsch E."/>
            <person name="Rutherford K.M."/>
            <person name="Rutter S."/>
            <person name="Saunders D."/>
            <person name="Seeger K."/>
            <person name="Sharp S."/>
            <person name="Skelton J."/>
            <person name="Simmonds M.N."/>
            <person name="Squares R."/>
            <person name="Squares S."/>
            <person name="Stevens K."/>
            <person name="Taylor K."/>
            <person name="Taylor R.G."/>
            <person name="Tivey A."/>
            <person name="Walsh S.V."/>
            <person name="Warren T."/>
            <person name="Whitehead S."/>
            <person name="Woodward J.R."/>
            <person name="Volckaert G."/>
            <person name="Aert R."/>
            <person name="Robben J."/>
            <person name="Grymonprez B."/>
            <person name="Weltjens I."/>
            <person name="Vanstreels E."/>
            <person name="Rieger M."/>
            <person name="Schaefer M."/>
            <person name="Mueller-Auer S."/>
            <person name="Gabel C."/>
            <person name="Fuchs M."/>
            <person name="Duesterhoeft A."/>
            <person name="Fritzc C."/>
            <person name="Holzer E."/>
            <person name="Moestl D."/>
            <person name="Hilbert H."/>
            <person name="Borzym K."/>
            <person name="Langer I."/>
            <person name="Beck A."/>
            <person name="Lehrach H."/>
            <person name="Reinhardt R."/>
            <person name="Pohl T.M."/>
            <person name="Eger P."/>
            <person name="Zimmermann W."/>
            <person name="Wedler H."/>
            <person name="Wambutt R."/>
            <person name="Purnelle B."/>
            <person name="Goffeau A."/>
            <person name="Cadieu E."/>
            <person name="Dreano S."/>
            <person name="Gloux S."/>
            <person name="Lelaure V."/>
            <person name="Mottier S."/>
            <person name="Galibert F."/>
            <person name="Aves S.J."/>
            <person name="Xiang Z."/>
            <person name="Hunt C."/>
            <person name="Moore K."/>
            <person name="Hurst S.M."/>
            <person name="Lucas M."/>
            <person name="Rochet M."/>
            <person name="Gaillardin C."/>
            <person name="Tallada V.A."/>
            <person name="Garzon A."/>
            <person name="Thode G."/>
            <person name="Daga R.R."/>
            <person name="Cruzado L."/>
            <person name="Jimenez J."/>
            <person name="Sanchez M."/>
            <person name="del Rey F."/>
            <person name="Benito J."/>
            <person name="Dominguez A."/>
            <person name="Revuelta J.L."/>
            <person name="Moreno S."/>
            <person name="Armstrong J."/>
            <person name="Forsburg S.L."/>
            <person name="Cerutti L."/>
            <person name="Lowe T."/>
            <person name="McCombie W.R."/>
            <person name="Paulsen I."/>
            <person name="Potashkin J."/>
            <person name="Shpakovski G.V."/>
            <person name="Ussery D."/>
            <person name="Barrell B.G."/>
            <person name="Nurse P."/>
        </authorList>
    </citation>
    <scope>NUCLEOTIDE SEQUENCE [LARGE SCALE GENOMIC DNA]</scope>
    <source>
        <strain>972 / ATCC 24843</strain>
    </source>
</reference>
<reference key="2">
    <citation type="submission" date="1998-07" db="EMBL/GenBank/DDBJ databases">
        <title>S.pombe KES1/HES1 homolog.</title>
        <authorList>
            <person name="Kawamukai M."/>
        </authorList>
    </citation>
    <scope>NUCLEOTIDE SEQUENCE [MRNA] OF 3-388</scope>
</reference>
<evidence type="ECO:0000250" key="1">
    <source>
        <dbReference type="UniProtKB" id="P35844"/>
    </source>
</evidence>
<evidence type="ECO:0000305" key="2"/>